<proteinExistence type="uncertain"/>
<reference key="1">
    <citation type="journal article" date="1997" name="Nature">
        <title>The nucleotide sequence of Saccharomyces cerevisiae chromosome IV.</title>
        <authorList>
            <person name="Jacq C."/>
            <person name="Alt-Moerbe J."/>
            <person name="Andre B."/>
            <person name="Arnold W."/>
            <person name="Bahr A."/>
            <person name="Ballesta J.P.G."/>
            <person name="Bargues M."/>
            <person name="Baron L."/>
            <person name="Becker A."/>
            <person name="Biteau N."/>
            <person name="Bloecker H."/>
            <person name="Blugeon C."/>
            <person name="Boskovic J."/>
            <person name="Brandt P."/>
            <person name="Brueckner M."/>
            <person name="Buitrago M.J."/>
            <person name="Coster F."/>
            <person name="Delaveau T."/>
            <person name="del Rey F."/>
            <person name="Dujon B."/>
            <person name="Eide L.G."/>
            <person name="Garcia-Cantalejo J.M."/>
            <person name="Goffeau A."/>
            <person name="Gomez-Peris A."/>
            <person name="Granotier C."/>
            <person name="Hanemann V."/>
            <person name="Hankeln T."/>
            <person name="Hoheisel J.D."/>
            <person name="Jaeger W."/>
            <person name="Jimenez A."/>
            <person name="Jonniaux J.-L."/>
            <person name="Kraemer C."/>
            <person name="Kuester H."/>
            <person name="Laamanen P."/>
            <person name="Legros Y."/>
            <person name="Louis E.J."/>
            <person name="Moeller-Rieker S."/>
            <person name="Monnet A."/>
            <person name="Moro M."/>
            <person name="Mueller-Auer S."/>
            <person name="Nussbaumer B."/>
            <person name="Paricio N."/>
            <person name="Paulin L."/>
            <person name="Perea J."/>
            <person name="Perez-Alonso M."/>
            <person name="Perez-Ortin J.E."/>
            <person name="Pohl T.M."/>
            <person name="Prydz H."/>
            <person name="Purnelle B."/>
            <person name="Rasmussen S.W."/>
            <person name="Remacha M.A."/>
            <person name="Revuelta J.L."/>
            <person name="Rieger M."/>
            <person name="Salom D."/>
            <person name="Saluz H.P."/>
            <person name="Saiz J.E."/>
            <person name="Saren A.-M."/>
            <person name="Schaefer M."/>
            <person name="Scharfe M."/>
            <person name="Schmidt E.R."/>
            <person name="Schneider C."/>
            <person name="Scholler P."/>
            <person name="Schwarz S."/>
            <person name="Soler-Mira A."/>
            <person name="Urrestarazu L.A."/>
            <person name="Verhasselt P."/>
            <person name="Vissers S."/>
            <person name="Voet M."/>
            <person name="Volckaert G."/>
            <person name="Wagner G."/>
            <person name="Wambutt R."/>
            <person name="Wedler E."/>
            <person name="Wedler H."/>
            <person name="Woelfl S."/>
            <person name="Harris D.E."/>
            <person name="Bowman S."/>
            <person name="Brown D."/>
            <person name="Churcher C.M."/>
            <person name="Connor R."/>
            <person name="Dedman K."/>
            <person name="Gentles S."/>
            <person name="Hamlin N."/>
            <person name="Hunt S."/>
            <person name="Jones L."/>
            <person name="McDonald S."/>
            <person name="Murphy L.D."/>
            <person name="Niblett D."/>
            <person name="Odell C."/>
            <person name="Oliver K."/>
            <person name="Rajandream M.A."/>
            <person name="Richards C."/>
            <person name="Shore L."/>
            <person name="Walsh S.V."/>
            <person name="Barrell B.G."/>
            <person name="Dietrich F.S."/>
            <person name="Mulligan J.T."/>
            <person name="Allen E."/>
            <person name="Araujo R."/>
            <person name="Aviles E."/>
            <person name="Berno A."/>
            <person name="Carpenter J."/>
            <person name="Chen E."/>
            <person name="Cherry J.M."/>
            <person name="Chung E."/>
            <person name="Duncan M."/>
            <person name="Hunicke-Smith S."/>
            <person name="Hyman R.W."/>
            <person name="Komp C."/>
            <person name="Lashkari D."/>
            <person name="Lew H."/>
            <person name="Lin D."/>
            <person name="Mosedale D."/>
            <person name="Nakahara K."/>
            <person name="Namath A."/>
            <person name="Oefner P."/>
            <person name="Oh C."/>
            <person name="Petel F.X."/>
            <person name="Roberts D."/>
            <person name="Schramm S."/>
            <person name="Schroeder M."/>
            <person name="Shogren T."/>
            <person name="Shroff N."/>
            <person name="Winant A."/>
            <person name="Yelton M.A."/>
            <person name="Botstein D."/>
            <person name="Davis R.W."/>
            <person name="Johnston M."/>
            <person name="Andrews S."/>
            <person name="Brinkman R."/>
            <person name="Cooper J."/>
            <person name="Ding H."/>
            <person name="Du Z."/>
            <person name="Favello A."/>
            <person name="Fulton L."/>
            <person name="Gattung S."/>
            <person name="Greco T."/>
            <person name="Hallsworth K."/>
            <person name="Hawkins J."/>
            <person name="Hillier L.W."/>
            <person name="Jier M."/>
            <person name="Johnson D."/>
            <person name="Johnston L."/>
            <person name="Kirsten J."/>
            <person name="Kucaba T."/>
            <person name="Langston Y."/>
            <person name="Latreille P."/>
            <person name="Le T."/>
            <person name="Mardis E."/>
            <person name="Menezes S."/>
            <person name="Miller N."/>
            <person name="Nhan M."/>
            <person name="Pauley A."/>
            <person name="Peluso D."/>
            <person name="Rifkin L."/>
            <person name="Riles L."/>
            <person name="Taich A."/>
            <person name="Trevaskis E."/>
            <person name="Vignati D."/>
            <person name="Wilcox L."/>
            <person name="Wohldman P."/>
            <person name="Vaudin M."/>
            <person name="Wilson R."/>
            <person name="Waterston R."/>
            <person name="Albermann K."/>
            <person name="Hani J."/>
            <person name="Heumann K."/>
            <person name="Kleine K."/>
            <person name="Mewes H.-W."/>
            <person name="Zollner A."/>
            <person name="Zaccaria P."/>
        </authorList>
    </citation>
    <scope>NUCLEOTIDE SEQUENCE [LARGE SCALE GENOMIC DNA]</scope>
    <source>
        <strain>ATCC 204508 / S288c</strain>
    </source>
</reference>
<reference key="2">
    <citation type="journal article" date="2014" name="G3 (Bethesda)">
        <title>The reference genome sequence of Saccharomyces cerevisiae: Then and now.</title>
        <authorList>
            <person name="Engel S.R."/>
            <person name="Dietrich F.S."/>
            <person name="Fisk D.G."/>
            <person name="Binkley G."/>
            <person name="Balakrishnan R."/>
            <person name="Costanzo M.C."/>
            <person name="Dwight S.S."/>
            <person name="Hitz B.C."/>
            <person name="Karra K."/>
            <person name="Nash R.S."/>
            <person name="Weng S."/>
            <person name="Wong E.D."/>
            <person name="Lloyd P."/>
            <person name="Skrzypek M.S."/>
            <person name="Miyasato S.R."/>
            <person name="Simison M."/>
            <person name="Cherry J.M."/>
        </authorList>
    </citation>
    <scope>GENOME REANNOTATION</scope>
    <source>
        <strain>ATCC 204508 / S288c</strain>
    </source>
</reference>
<reference key="3">
    <citation type="journal article" date="2002" name="Nat. Biotechnol.">
        <title>An integrated approach for finding overlooked genes in yeast.</title>
        <authorList>
            <person name="Kumar A."/>
            <person name="Harrison P.M."/>
            <person name="Cheung K.-H."/>
            <person name="Lan N."/>
            <person name="Echols N."/>
            <person name="Bertone P."/>
            <person name="Miller P."/>
            <person name="Gerstein M.B."/>
            <person name="Snyder M."/>
        </authorList>
    </citation>
    <scope>NUCLEOTIDE SEQUENCE [GENOMIC DNA]</scope>
</reference>
<comment type="subcellular location">
    <subcellularLocation>
        <location evidence="2">Membrane</location>
        <topology evidence="2">Single-pass membrane protein</topology>
    </subcellularLocation>
</comment>
<comment type="caution">
    <text evidence="3">Product of a dubious gene prediction unlikely to encode a functional protein. Because of that it is not part of the S.cerevisiae S288c complete/reference proteome set.</text>
</comment>
<keyword id="KW-0472">Membrane</keyword>
<keyword id="KW-0812">Transmembrane</keyword>
<keyword id="KW-1133">Transmembrane helix</keyword>
<feature type="chain" id="PRO_0000299901" description="Putative uncharacterized protein YDR510C-A">
    <location>
        <begin position="1"/>
        <end position="38"/>
    </location>
</feature>
<feature type="transmembrane region" description="Helical" evidence="1">
    <location>
        <begin position="10"/>
        <end position="32"/>
    </location>
</feature>
<gene>
    <name type="ordered locus">YDR510C-A</name>
</gene>
<sequence>MLYNMNYLVFSLLWYFLVGGGKGEVCWRFLGIVKSPNT</sequence>
<protein>
    <recommendedName>
        <fullName>Putative uncharacterized protein YDR510C-A</fullName>
    </recommendedName>
</protein>
<evidence type="ECO:0000255" key="1"/>
<evidence type="ECO:0000305" key="2"/>
<evidence type="ECO:0000305" key="3">
    <source>
    </source>
</evidence>
<name>YD510_YEAST</name>
<dbReference type="EMBL" id="U33057">
    <property type="status" value="NOT_ANNOTATED_CDS"/>
    <property type="molecule type" value="Genomic_DNA"/>
</dbReference>
<dbReference type="EMBL" id="AF479918">
    <property type="protein sequence ID" value="AAL79231.1"/>
    <property type="molecule type" value="Genomic_DNA"/>
</dbReference>
<dbReference type="SMR" id="Q8TGR7"/>
<dbReference type="STRING" id="4932.YDR510C-A"/>
<dbReference type="PaxDb" id="4932-YDR510C-A"/>
<dbReference type="EnsemblFungi" id="YDR510C-A_mRNA">
    <property type="protein sequence ID" value="YDR510C-A"/>
    <property type="gene ID" value="YDR510C-A"/>
</dbReference>
<dbReference type="AGR" id="SGD:S000028615"/>
<dbReference type="SGD" id="S000028615">
    <property type="gene designation" value="YDR510C-A"/>
</dbReference>
<dbReference type="HOGENOM" id="CLU_3335853_0_0_1"/>
<dbReference type="GO" id="GO:0016020">
    <property type="term" value="C:membrane"/>
    <property type="evidence" value="ECO:0007669"/>
    <property type="project" value="UniProtKB-SubCell"/>
</dbReference>
<accession>Q8TGR7</accession>
<organism>
    <name type="scientific">Saccharomyces cerevisiae (strain ATCC 204508 / S288c)</name>
    <name type="common">Baker's yeast</name>
    <dbReference type="NCBI Taxonomy" id="559292"/>
    <lineage>
        <taxon>Eukaryota</taxon>
        <taxon>Fungi</taxon>
        <taxon>Dikarya</taxon>
        <taxon>Ascomycota</taxon>
        <taxon>Saccharomycotina</taxon>
        <taxon>Saccharomycetes</taxon>
        <taxon>Saccharomycetales</taxon>
        <taxon>Saccharomycetaceae</taxon>
        <taxon>Saccharomyces</taxon>
    </lineage>
</organism>